<accession>Q921R4</accession>
<accession>Q3TX73</accession>
<accession>Q8BUU3</accession>
<accession>Q9CYB7</accession>
<name>DJC14_MOUSE</name>
<reference key="1">
    <citation type="journal article" date="2005" name="Science">
        <title>The transcriptional landscape of the mammalian genome.</title>
        <authorList>
            <person name="Carninci P."/>
            <person name="Kasukawa T."/>
            <person name="Katayama S."/>
            <person name="Gough J."/>
            <person name="Frith M.C."/>
            <person name="Maeda N."/>
            <person name="Oyama R."/>
            <person name="Ravasi T."/>
            <person name="Lenhard B."/>
            <person name="Wells C."/>
            <person name="Kodzius R."/>
            <person name="Shimokawa K."/>
            <person name="Bajic V.B."/>
            <person name="Brenner S.E."/>
            <person name="Batalov S."/>
            <person name="Forrest A.R."/>
            <person name="Zavolan M."/>
            <person name="Davis M.J."/>
            <person name="Wilming L.G."/>
            <person name="Aidinis V."/>
            <person name="Allen J.E."/>
            <person name="Ambesi-Impiombato A."/>
            <person name="Apweiler R."/>
            <person name="Aturaliya R.N."/>
            <person name="Bailey T.L."/>
            <person name="Bansal M."/>
            <person name="Baxter L."/>
            <person name="Beisel K.W."/>
            <person name="Bersano T."/>
            <person name="Bono H."/>
            <person name="Chalk A.M."/>
            <person name="Chiu K.P."/>
            <person name="Choudhary V."/>
            <person name="Christoffels A."/>
            <person name="Clutterbuck D.R."/>
            <person name="Crowe M.L."/>
            <person name="Dalla E."/>
            <person name="Dalrymple B.P."/>
            <person name="de Bono B."/>
            <person name="Della Gatta G."/>
            <person name="di Bernardo D."/>
            <person name="Down T."/>
            <person name="Engstrom P."/>
            <person name="Fagiolini M."/>
            <person name="Faulkner G."/>
            <person name="Fletcher C.F."/>
            <person name="Fukushima T."/>
            <person name="Furuno M."/>
            <person name="Futaki S."/>
            <person name="Gariboldi M."/>
            <person name="Georgii-Hemming P."/>
            <person name="Gingeras T.R."/>
            <person name="Gojobori T."/>
            <person name="Green R.E."/>
            <person name="Gustincich S."/>
            <person name="Harbers M."/>
            <person name="Hayashi Y."/>
            <person name="Hensch T.K."/>
            <person name="Hirokawa N."/>
            <person name="Hill D."/>
            <person name="Huminiecki L."/>
            <person name="Iacono M."/>
            <person name="Ikeo K."/>
            <person name="Iwama A."/>
            <person name="Ishikawa T."/>
            <person name="Jakt M."/>
            <person name="Kanapin A."/>
            <person name="Katoh M."/>
            <person name="Kawasawa Y."/>
            <person name="Kelso J."/>
            <person name="Kitamura H."/>
            <person name="Kitano H."/>
            <person name="Kollias G."/>
            <person name="Krishnan S.P."/>
            <person name="Kruger A."/>
            <person name="Kummerfeld S.K."/>
            <person name="Kurochkin I.V."/>
            <person name="Lareau L.F."/>
            <person name="Lazarevic D."/>
            <person name="Lipovich L."/>
            <person name="Liu J."/>
            <person name="Liuni S."/>
            <person name="McWilliam S."/>
            <person name="Madan Babu M."/>
            <person name="Madera M."/>
            <person name="Marchionni L."/>
            <person name="Matsuda H."/>
            <person name="Matsuzawa S."/>
            <person name="Miki H."/>
            <person name="Mignone F."/>
            <person name="Miyake S."/>
            <person name="Morris K."/>
            <person name="Mottagui-Tabar S."/>
            <person name="Mulder N."/>
            <person name="Nakano N."/>
            <person name="Nakauchi H."/>
            <person name="Ng P."/>
            <person name="Nilsson R."/>
            <person name="Nishiguchi S."/>
            <person name="Nishikawa S."/>
            <person name="Nori F."/>
            <person name="Ohara O."/>
            <person name="Okazaki Y."/>
            <person name="Orlando V."/>
            <person name="Pang K.C."/>
            <person name="Pavan W.J."/>
            <person name="Pavesi G."/>
            <person name="Pesole G."/>
            <person name="Petrovsky N."/>
            <person name="Piazza S."/>
            <person name="Reed J."/>
            <person name="Reid J.F."/>
            <person name="Ring B.Z."/>
            <person name="Ringwald M."/>
            <person name="Rost B."/>
            <person name="Ruan Y."/>
            <person name="Salzberg S.L."/>
            <person name="Sandelin A."/>
            <person name="Schneider C."/>
            <person name="Schoenbach C."/>
            <person name="Sekiguchi K."/>
            <person name="Semple C.A."/>
            <person name="Seno S."/>
            <person name="Sessa L."/>
            <person name="Sheng Y."/>
            <person name="Shibata Y."/>
            <person name="Shimada H."/>
            <person name="Shimada K."/>
            <person name="Silva D."/>
            <person name="Sinclair B."/>
            <person name="Sperling S."/>
            <person name="Stupka E."/>
            <person name="Sugiura K."/>
            <person name="Sultana R."/>
            <person name="Takenaka Y."/>
            <person name="Taki K."/>
            <person name="Tammoja K."/>
            <person name="Tan S.L."/>
            <person name="Tang S."/>
            <person name="Taylor M.S."/>
            <person name="Tegner J."/>
            <person name="Teichmann S.A."/>
            <person name="Ueda H.R."/>
            <person name="van Nimwegen E."/>
            <person name="Verardo R."/>
            <person name="Wei C.L."/>
            <person name="Yagi K."/>
            <person name="Yamanishi H."/>
            <person name="Zabarovsky E."/>
            <person name="Zhu S."/>
            <person name="Zimmer A."/>
            <person name="Hide W."/>
            <person name="Bult C."/>
            <person name="Grimmond S.M."/>
            <person name="Teasdale R.D."/>
            <person name="Liu E.T."/>
            <person name="Brusic V."/>
            <person name="Quackenbush J."/>
            <person name="Wahlestedt C."/>
            <person name="Mattick J.S."/>
            <person name="Hume D.A."/>
            <person name="Kai C."/>
            <person name="Sasaki D."/>
            <person name="Tomaru Y."/>
            <person name="Fukuda S."/>
            <person name="Kanamori-Katayama M."/>
            <person name="Suzuki M."/>
            <person name="Aoki J."/>
            <person name="Arakawa T."/>
            <person name="Iida J."/>
            <person name="Imamura K."/>
            <person name="Itoh M."/>
            <person name="Kato T."/>
            <person name="Kawaji H."/>
            <person name="Kawagashira N."/>
            <person name="Kawashima T."/>
            <person name="Kojima M."/>
            <person name="Kondo S."/>
            <person name="Konno H."/>
            <person name="Nakano K."/>
            <person name="Ninomiya N."/>
            <person name="Nishio T."/>
            <person name="Okada M."/>
            <person name="Plessy C."/>
            <person name="Shibata K."/>
            <person name="Shiraki T."/>
            <person name="Suzuki S."/>
            <person name="Tagami M."/>
            <person name="Waki K."/>
            <person name="Watahiki A."/>
            <person name="Okamura-Oho Y."/>
            <person name="Suzuki H."/>
            <person name="Kawai J."/>
            <person name="Hayashizaki Y."/>
        </authorList>
    </citation>
    <scope>NUCLEOTIDE SEQUENCE [LARGE SCALE MRNA]</scope>
    <source>
        <strain>C57BL/6J</strain>
        <tissue>Cerebellum</tissue>
        <tissue>Corpora quadrigemina</tissue>
        <tissue>Embryo</tissue>
    </source>
</reference>
<reference key="2">
    <citation type="journal article" date="2004" name="Genome Res.">
        <title>The status, quality, and expansion of the NIH full-length cDNA project: the Mammalian Gene Collection (MGC).</title>
        <authorList>
            <consortium name="The MGC Project Team"/>
        </authorList>
    </citation>
    <scope>NUCLEOTIDE SEQUENCE [LARGE SCALE MRNA]</scope>
    <scope>VARIANTS PRO-203 AND VAL-642</scope>
    <source>
        <strain>Czech II</strain>
        <tissue>Mammary tumor</tissue>
    </source>
</reference>
<gene>
    <name type="primary">Dnajc14</name>
</gene>
<sequence length="703" mass="78919">MAQKHPGERRLCGAHRSGGTSLSTSGSSVDPEILSFSGLRDSAETAPNGTRCLKEHSGPKYTQPPNPAHWSDPSHGPPRGPGPPRGGGYPDESETGSEESGVDQELSRENETGYQEDGSPSFLSIPSACNCQGSPGVPEGTYSEEGDGSSSSLCHHCTSPALGEDEELEEEYDDEEPLKFPSDFSRVSSGKKPLSRRQKHRFLIKEDVRDSGRREPKAPGRHRLARKRSQTDKRRGLGLWGVEELCQLGQAGFWWLIELLVLVGEYVETCGHLIYACRKLKGSDLDLFRVWVGVWARRLGGWARMMFQFLSQSFFCVVGLLIRILRVVGAFLLLALALFLGCLQLGWRFSVGLGNRLGWRDKTAWLFSWLGSPALHHCLTLLKDSRPWQQLVRLIQWGWQELPWVKQRTKKQGNAPVASGRYCQPEEEVTRLLTMAGVPEDELNPFHVLGVEATASDTELKKAYRQLAVMVHPDKNHHPRAEEAFKILRAAWDIVSNPERRKEYEMKRMAENELSRSVNEFLSKLQDDLKEAMNTMMCSRCQGKHRRFEMDREPKSARYCAECNRLHPAEEGDFWAESSMLGLKITYFALMDGKVYDITEWAGCQRVGISPDTHRVPYHISFGSRVPGTSGRQRATPESPPADLQDFLSRIFQVPPGPMSNGNFFAAPHPGPGTTSTSRPNSSVPKGEAKPKRRKKVRRPFQR</sequence>
<feature type="chain" id="PRO_0000247494" description="DnaJ homolog subfamily C member 14">
    <location>
        <begin position="1"/>
        <end position="703"/>
    </location>
</feature>
<feature type="transmembrane region" description="Helical" evidence="2">
    <location>
        <begin position="305"/>
        <end position="325"/>
    </location>
</feature>
<feature type="transmembrane region" description="Helical" evidence="2">
    <location>
        <begin position="327"/>
        <end position="347"/>
    </location>
</feature>
<feature type="domain" description="J" evidence="3">
    <location>
        <begin position="444"/>
        <end position="508"/>
    </location>
</feature>
<feature type="region of interest" description="Disordered" evidence="4">
    <location>
        <begin position="1"/>
        <end position="229"/>
    </location>
</feature>
<feature type="region of interest" description="Disordered" evidence="4">
    <location>
        <begin position="622"/>
        <end position="643"/>
    </location>
</feature>
<feature type="region of interest" description="Disordered" evidence="4">
    <location>
        <begin position="659"/>
        <end position="703"/>
    </location>
</feature>
<feature type="compositionally biased region" description="Basic and acidic residues" evidence="4">
    <location>
        <begin position="1"/>
        <end position="11"/>
    </location>
</feature>
<feature type="compositionally biased region" description="Low complexity" evidence="4">
    <location>
        <begin position="17"/>
        <end position="28"/>
    </location>
</feature>
<feature type="compositionally biased region" description="Pro residues" evidence="4">
    <location>
        <begin position="75"/>
        <end position="84"/>
    </location>
</feature>
<feature type="compositionally biased region" description="Acidic residues" evidence="4">
    <location>
        <begin position="91"/>
        <end position="102"/>
    </location>
</feature>
<feature type="compositionally biased region" description="Polar residues" evidence="4">
    <location>
        <begin position="121"/>
        <end position="133"/>
    </location>
</feature>
<feature type="compositionally biased region" description="Acidic residues" evidence="4">
    <location>
        <begin position="163"/>
        <end position="176"/>
    </location>
</feature>
<feature type="compositionally biased region" description="Basic residues" evidence="4">
    <location>
        <begin position="193"/>
        <end position="202"/>
    </location>
</feature>
<feature type="compositionally biased region" description="Basic and acidic residues" evidence="4">
    <location>
        <begin position="203"/>
        <end position="218"/>
    </location>
</feature>
<feature type="compositionally biased region" description="Basic residues" evidence="4">
    <location>
        <begin position="219"/>
        <end position="228"/>
    </location>
</feature>
<feature type="compositionally biased region" description="Polar residues" evidence="4">
    <location>
        <begin position="673"/>
        <end position="684"/>
    </location>
</feature>
<feature type="compositionally biased region" description="Basic residues" evidence="4">
    <location>
        <begin position="691"/>
        <end position="703"/>
    </location>
</feature>
<feature type="sequence variant" description="In strain: Czech II." evidence="5">
    <original>L</original>
    <variation>P</variation>
    <location>
        <position position="203"/>
    </location>
</feature>
<feature type="sequence variant" description="In strain: Czech II." evidence="5">
    <original>A</original>
    <variation>V</variation>
    <location>
        <position position="642"/>
    </location>
</feature>
<feature type="sequence conflict" description="In Ref. 1; BAE35043." evidence="6" ref="1">
    <original>E</original>
    <variation>K</variation>
    <location>
        <position position="268"/>
    </location>
</feature>
<feature type="sequence conflict" description="In Ref. 1; BAC38536." evidence="6" ref="1">
    <original>R</original>
    <variation>G</variation>
    <location>
        <position position="558"/>
    </location>
</feature>
<proteinExistence type="evidence at transcript level"/>
<dbReference type="EMBL" id="AK017830">
    <property type="protein sequence ID" value="BAB30962.1"/>
    <property type="molecule type" value="mRNA"/>
</dbReference>
<dbReference type="EMBL" id="AK045445">
    <property type="protein sequence ID" value="BAC32372.1"/>
    <property type="molecule type" value="mRNA"/>
</dbReference>
<dbReference type="EMBL" id="AK082579">
    <property type="protein sequence ID" value="BAC38536.1"/>
    <property type="molecule type" value="mRNA"/>
</dbReference>
<dbReference type="EMBL" id="AK159388">
    <property type="protein sequence ID" value="BAE35043.1"/>
    <property type="molecule type" value="mRNA"/>
</dbReference>
<dbReference type="EMBL" id="BC011146">
    <property type="protein sequence ID" value="AAH11146.1"/>
    <property type="molecule type" value="mRNA"/>
</dbReference>
<dbReference type="CCDS" id="CCDS24294.1"/>
<dbReference type="RefSeq" id="NP_001346753.1">
    <property type="nucleotide sequence ID" value="NM_001359824.1"/>
</dbReference>
<dbReference type="RefSeq" id="NP_001346754.1">
    <property type="nucleotide sequence ID" value="NM_001359825.1"/>
</dbReference>
<dbReference type="RefSeq" id="NP_083149.3">
    <property type="nucleotide sequence ID" value="NM_028873.4"/>
</dbReference>
<dbReference type="RefSeq" id="XP_006514312.1">
    <property type="nucleotide sequence ID" value="XM_006514249.3"/>
</dbReference>
<dbReference type="RefSeq" id="XP_006514313.1">
    <property type="nucleotide sequence ID" value="XM_006514250.2"/>
</dbReference>
<dbReference type="RefSeq" id="XP_006514314.1">
    <property type="nucleotide sequence ID" value="XM_006514251.1"/>
</dbReference>
<dbReference type="SMR" id="Q921R4"/>
<dbReference type="BioGRID" id="216670">
    <property type="interactions" value="2"/>
</dbReference>
<dbReference type="FunCoup" id="Q921R4">
    <property type="interactions" value="2465"/>
</dbReference>
<dbReference type="STRING" id="10090.ENSMUSP00000026410"/>
<dbReference type="iPTMnet" id="Q921R4"/>
<dbReference type="PhosphoSitePlus" id="Q921R4"/>
<dbReference type="PaxDb" id="10090-ENSMUSP00000026410"/>
<dbReference type="ProteomicsDB" id="279420"/>
<dbReference type="Pumba" id="Q921R4"/>
<dbReference type="DNASU" id="74330"/>
<dbReference type="Ensembl" id="ENSMUST00000026410.2">
    <property type="protein sequence ID" value="ENSMUSP00000026410.2"/>
    <property type="gene ID" value="ENSMUSG00000025354.6"/>
</dbReference>
<dbReference type="Ensembl" id="ENSMUST00000217745.2">
    <property type="protein sequence ID" value="ENSMUSP00000151530.2"/>
    <property type="gene ID" value="ENSMUSG00000025354.6"/>
</dbReference>
<dbReference type="Ensembl" id="ENSMUST00000219508.2">
    <property type="protein sequence ID" value="ENSMUSP00000151343.2"/>
    <property type="gene ID" value="ENSMUSG00000025354.6"/>
</dbReference>
<dbReference type="GeneID" id="74330"/>
<dbReference type="KEGG" id="mmu:74330"/>
<dbReference type="UCSC" id="uc007hok.1">
    <property type="organism name" value="mouse"/>
</dbReference>
<dbReference type="AGR" id="MGI:1921580"/>
<dbReference type="CTD" id="85406"/>
<dbReference type="MGI" id="MGI:1921580">
    <property type="gene designation" value="Dnajc14"/>
</dbReference>
<dbReference type="VEuPathDB" id="HostDB:ENSMUSG00000025354"/>
<dbReference type="eggNOG" id="KOG0720">
    <property type="taxonomic scope" value="Eukaryota"/>
</dbReference>
<dbReference type="GeneTree" id="ENSGT00940000155637"/>
<dbReference type="HOGENOM" id="CLU_020746_0_0_1"/>
<dbReference type="InParanoid" id="Q921R4"/>
<dbReference type="OMA" id="WLELPWF"/>
<dbReference type="OrthoDB" id="1507364at2759"/>
<dbReference type="PhylomeDB" id="Q921R4"/>
<dbReference type="TreeFam" id="TF105173"/>
<dbReference type="BioGRID-ORCS" id="74330">
    <property type="hits" value="1 hit in 78 CRISPR screens"/>
</dbReference>
<dbReference type="ChiTaRS" id="Dnajc14">
    <property type="organism name" value="mouse"/>
</dbReference>
<dbReference type="PRO" id="PR:Q921R4"/>
<dbReference type="Proteomes" id="UP000000589">
    <property type="component" value="Chromosome 10"/>
</dbReference>
<dbReference type="RNAct" id="Q921R4">
    <property type="molecule type" value="protein"/>
</dbReference>
<dbReference type="Bgee" id="ENSMUSG00000025354">
    <property type="expression patterns" value="Expressed in lacrimal gland and 248 other cell types or tissues"/>
</dbReference>
<dbReference type="ExpressionAtlas" id="Q921R4">
    <property type="expression patterns" value="baseline and differential"/>
</dbReference>
<dbReference type="GO" id="GO:0005789">
    <property type="term" value="C:endoplasmic reticulum membrane"/>
    <property type="evidence" value="ECO:0007669"/>
    <property type="project" value="UniProtKB-SubCell"/>
</dbReference>
<dbReference type="GO" id="GO:0050780">
    <property type="term" value="F:dopamine receptor binding"/>
    <property type="evidence" value="ECO:0007669"/>
    <property type="project" value="Ensembl"/>
</dbReference>
<dbReference type="GO" id="GO:0015031">
    <property type="term" value="P:protein transport"/>
    <property type="evidence" value="ECO:0007669"/>
    <property type="project" value="UniProtKB-KW"/>
</dbReference>
<dbReference type="CDD" id="cd06257">
    <property type="entry name" value="DnaJ"/>
    <property type="match status" value="1"/>
</dbReference>
<dbReference type="FunFam" id="1.10.287.110:FF:000057">
    <property type="entry name" value="dnaJ homolog subfamily C member 14"/>
    <property type="match status" value="1"/>
</dbReference>
<dbReference type="Gene3D" id="1.10.287.110">
    <property type="entry name" value="DnaJ domain"/>
    <property type="match status" value="1"/>
</dbReference>
<dbReference type="InterPro" id="IPR001623">
    <property type="entry name" value="DnaJ_domain"/>
</dbReference>
<dbReference type="InterPro" id="IPR036869">
    <property type="entry name" value="J_dom_sf"/>
</dbReference>
<dbReference type="InterPro" id="IPR032843">
    <property type="entry name" value="Jiv"/>
</dbReference>
<dbReference type="InterPro" id="IPR052317">
    <property type="entry name" value="Viral_replicn-host_int_reg"/>
</dbReference>
<dbReference type="PANTHER" id="PTHR44665">
    <property type="entry name" value="DNAJ HOMOLOG SUBFAMILY C MEMBER 14"/>
    <property type="match status" value="1"/>
</dbReference>
<dbReference type="PANTHER" id="PTHR44665:SF1">
    <property type="entry name" value="DNAJ HOMOLOG SUBFAMILY C MEMBER 14"/>
    <property type="match status" value="1"/>
</dbReference>
<dbReference type="Pfam" id="PF00226">
    <property type="entry name" value="DnaJ"/>
    <property type="match status" value="1"/>
</dbReference>
<dbReference type="Pfam" id="PF14901">
    <property type="entry name" value="Jiv90"/>
    <property type="match status" value="1"/>
</dbReference>
<dbReference type="PRINTS" id="PR00625">
    <property type="entry name" value="JDOMAIN"/>
</dbReference>
<dbReference type="SMART" id="SM00271">
    <property type="entry name" value="DnaJ"/>
    <property type="match status" value="1"/>
</dbReference>
<dbReference type="SUPFAM" id="SSF46565">
    <property type="entry name" value="Chaperone J-domain"/>
    <property type="match status" value="1"/>
</dbReference>
<dbReference type="PROSITE" id="PS50076">
    <property type="entry name" value="DNAJ_2"/>
    <property type="match status" value="1"/>
</dbReference>
<keyword id="KW-0143">Chaperone</keyword>
<keyword id="KW-0256">Endoplasmic reticulum</keyword>
<keyword id="KW-0472">Membrane</keyword>
<keyword id="KW-0653">Protein transport</keyword>
<keyword id="KW-1185">Reference proteome</keyword>
<keyword id="KW-0812">Transmembrane</keyword>
<keyword id="KW-1133">Transmembrane helix</keyword>
<keyword id="KW-0813">Transport</keyword>
<comment type="function">
    <text evidence="1">Regulates the export of target proteins, such as DRD1, from the endoplasmic reticulum to the cell surface.</text>
</comment>
<comment type="subunit">
    <text evidence="1">Interacts with the FxxxFxxxF motif of DRD1 via its C-terminal domain.</text>
</comment>
<comment type="subcellular location">
    <subcellularLocation>
        <location evidence="1">Endoplasmic reticulum membrane</location>
        <topology evidence="1">Multi-pass membrane protein</topology>
    </subcellularLocation>
</comment>
<protein>
    <recommendedName>
        <fullName>DnaJ homolog subfamily C member 14</fullName>
    </recommendedName>
</protein>
<organism>
    <name type="scientific">Mus musculus</name>
    <name type="common">Mouse</name>
    <dbReference type="NCBI Taxonomy" id="10090"/>
    <lineage>
        <taxon>Eukaryota</taxon>
        <taxon>Metazoa</taxon>
        <taxon>Chordata</taxon>
        <taxon>Craniata</taxon>
        <taxon>Vertebrata</taxon>
        <taxon>Euteleostomi</taxon>
        <taxon>Mammalia</taxon>
        <taxon>Eutheria</taxon>
        <taxon>Euarchontoglires</taxon>
        <taxon>Glires</taxon>
        <taxon>Rodentia</taxon>
        <taxon>Myomorpha</taxon>
        <taxon>Muroidea</taxon>
        <taxon>Muridae</taxon>
        <taxon>Murinae</taxon>
        <taxon>Mus</taxon>
        <taxon>Mus</taxon>
    </lineage>
</organism>
<evidence type="ECO:0000250" key="1"/>
<evidence type="ECO:0000255" key="2"/>
<evidence type="ECO:0000255" key="3">
    <source>
        <dbReference type="PROSITE-ProRule" id="PRU00286"/>
    </source>
</evidence>
<evidence type="ECO:0000256" key="4">
    <source>
        <dbReference type="SAM" id="MobiDB-lite"/>
    </source>
</evidence>
<evidence type="ECO:0000269" key="5">
    <source>
    </source>
</evidence>
<evidence type="ECO:0000305" key="6"/>